<keyword id="KW-0963">Cytoplasm</keyword>
<keyword id="KW-0324">Glycolysis</keyword>
<keyword id="KW-0456">Lyase</keyword>
<keyword id="KW-0460">Magnesium</keyword>
<keyword id="KW-0479">Metal-binding</keyword>
<keyword id="KW-0964">Secreted</keyword>
<sequence>MSKIVKVIGREIIDSRGNPTVEAEVHLEGGFVGLAAAPSGASTGSREALELRDGDKSRFLGKGVLKAVAAVNGPIAQAVLGKDAKDQANIDKIMIDLDGTENKSQFGANAILAVSLAAAKAAAASKGMPLYEHIAELNGTPGKFSMPLPMMNIINGGEHADNNVDIQEFMIQPVGAKSLKEAVRIGSEVFHHLAKVLKAKGLNTAVGDEGGYAPNLGSNAEALAVIAEAVKAAGYELGKDVTLAMDCAASEFYKDGKYVLAGEGNKAFTSEEFTHFLEDLTKQYPIVSIEDGLDESDWDGFAYQTKVLGDKIQLVGDDLFVTNTKILKEGIEKGIANSILIKFNQIGSLTETLAAIKMAKDAGYTAVISHRSGETEDATIADLAVGTAAGQIKTGSMSRSDRVAKYNQLIRIEEALGSRAPFNGLKEVKGQ</sequence>
<proteinExistence type="inferred from homology"/>
<feature type="chain" id="PRO_1000059461" description="Enolase">
    <location>
        <begin position="1"/>
        <end position="431"/>
    </location>
</feature>
<feature type="active site" description="Proton donor" evidence="1">
    <location>
        <position position="209"/>
    </location>
</feature>
<feature type="active site" description="Proton acceptor" evidence="1">
    <location>
        <position position="342"/>
    </location>
</feature>
<feature type="binding site" evidence="1">
    <location>
        <position position="167"/>
    </location>
    <ligand>
        <name>(2R)-2-phosphoglycerate</name>
        <dbReference type="ChEBI" id="CHEBI:58289"/>
    </ligand>
</feature>
<feature type="binding site" evidence="1">
    <location>
        <position position="246"/>
    </location>
    <ligand>
        <name>Mg(2+)</name>
        <dbReference type="ChEBI" id="CHEBI:18420"/>
    </ligand>
</feature>
<feature type="binding site" evidence="1">
    <location>
        <position position="290"/>
    </location>
    <ligand>
        <name>Mg(2+)</name>
        <dbReference type="ChEBI" id="CHEBI:18420"/>
    </ligand>
</feature>
<feature type="binding site" evidence="1">
    <location>
        <position position="317"/>
    </location>
    <ligand>
        <name>Mg(2+)</name>
        <dbReference type="ChEBI" id="CHEBI:18420"/>
    </ligand>
</feature>
<feature type="binding site" evidence="1">
    <location>
        <position position="342"/>
    </location>
    <ligand>
        <name>(2R)-2-phosphoglycerate</name>
        <dbReference type="ChEBI" id="CHEBI:58289"/>
    </ligand>
</feature>
<feature type="binding site" evidence="1">
    <location>
        <position position="371"/>
    </location>
    <ligand>
        <name>(2R)-2-phosphoglycerate</name>
        <dbReference type="ChEBI" id="CHEBI:58289"/>
    </ligand>
</feature>
<feature type="binding site" evidence="1">
    <location>
        <position position="372"/>
    </location>
    <ligand>
        <name>(2R)-2-phosphoglycerate</name>
        <dbReference type="ChEBI" id="CHEBI:58289"/>
    </ligand>
</feature>
<feature type="binding site" evidence="1">
    <location>
        <position position="393"/>
    </location>
    <ligand>
        <name>(2R)-2-phosphoglycerate</name>
        <dbReference type="ChEBI" id="CHEBI:58289"/>
    </ligand>
</feature>
<organism>
    <name type="scientific">Serratia proteamaculans (strain 568)</name>
    <dbReference type="NCBI Taxonomy" id="399741"/>
    <lineage>
        <taxon>Bacteria</taxon>
        <taxon>Pseudomonadati</taxon>
        <taxon>Pseudomonadota</taxon>
        <taxon>Gammaproteobacteria</taxon>
        <taxon>Enterobacterales</taxon>
        <taxon>Yersiniaceae</taxon>
        <taxon>Serratia</taxon>
    </lineage>
</organism>
<protein>
    <recommendedName>
        <fullName evidence="1">Enolase</fullName>
        <ecNumber evidence="1">4.2.1.11</ecNumber>
    </recommendedName>
    <alternativeName>
        <fullName evidence="1">2-phospho-D-glycerate hydro-lyase</fullName>
    </alternativeName>
    <alternativeName>
        <fullName evidence="1">2-phosphoglycerate dehydratase</fullName>
    </alternativeName>
</protein>
<evidence type="ECO:0000255" key="1">
    <source>
        <dbReference type="HAMAP-Rule" id="MF_00318"/>
    </source>
</evidence>
<name>ENO_SERP5</name>
<reference key="1">
    <citation type="submission" date="2007-09" db="EMBL/GenBank/DDBJ databases">
        <title>Complete sequence of chromosome of Serratia proteamaculans 568.</title>
        <authorList>
            <consortium name="US DOE Joint Genome Institute"/>
            <person name="Copeland A."/>
            <person name="Lucas S."/>
            <person name="Lapidus A."/>
            <person name="Barry K."/>
            <person name="Glavina del Rio T."/>
            <person name="Dalin E."/>
            <person name="Tice H."/>
            <person name="Pitluck S."/>
            <person name="Chain P."/>
            <person name="Malfatti S."/>
            <person name="Shin M."/>
            <person name="Vergez L."/>
            <person name="Schmutz J."/>
            <person name="Larimer F."/>
            <person name="Land M."/>
            <person name="Hauser L."/>
            <person name="Kyrpides N."/>
            <person name="Kim E."/>
            <person name="Taghavi S."/>
            <person name="Newman L."/>
            <person name="Vangronsveld J."/>
            <person name="van der Lelie D."/>
            <person name="Richardson P."/>
        </authorList>
    </citation>
    <scope>NUCLEOTIDE SEQUENCE [LARGE SCALE GENOMIC DNA]</scope>
    <source>
        <strain>568</strain>
    </source>
</reference>
<gene>
    <name evidence="1" type="primary">eno</name>
    <name type="ordered locus">Spro_0795</name>
</gene>
<comment type="function">
    <text evidence="1">Catalyzes the reversible conversion of 2-phosphoglycerate (2-PG) into phosphoenolpyruvate (PEP). It is essential for the degradation of carbohydrates via glycolysis.</text>
</comment>
<comment type="catalytic activity">
    <reaction evidence="1">
        <text>(2R)-2-phosphoglycerate = phosphoenolpyruvate + H2O</text>
        <dbReference type="Rhea" id="RHEA:10164"/>
        <dbReference type="ChEBI" id="CHEBI:15377"/>
        <dbReference type="ChEBI" id="CHEBI:58289"/>
        <dbReference type="ChEBI" id="CHEBI:58702"/>
        <dbReference type="EC" id="4.2.1.11"/>
    </reaction>
</comment>
<comment type="cofactor">
    <cofactor evidence="1">
        <name>Mg(2+)</name>
        <dbReference type="ChEBI" id="CHEBI:18420"/>
    </cofactor>
    <text evidence="1">Binds a second Mg(2+) ion via substrate during catalysis.</text>
</comment>
<comment type="pathway">
    <text evidence="1">Carbohydrate degradation; glycolysis; pyruvate from D-glyceraldehyde 3-phosphate: step 4/5.</text>
</comment>
<comment type="subunit">
    <text evidence="1">Component of the RNA degradosome, a multiprotein complex involved in RNA processing and mRNA degradation.</text>
</comment>
<comment type="subcellular location">
    <subcellularLocation>
        <location evidence="1">Cytoplasm</location>
    </subcellularLocation>
    <subcellularLocation>
        <location evidence="1">Secreted</location>
    </subcellularLocation>
    <subcellularLocation>
        <location evidence="1">Cell surface</location>
    </subcellularLocation>
    <text evidence="1">Fractions of enolase are present in both the cytoplasm and on the cell surface.</text>
</comment>
<comment type="similarity">
    <text evidence="1">Belongs to the enolase family.</text>
</comment>
<accession>A8G9W1</accession>
<dbReference type="EC" id="4.2.1.11" evidence="1"/>
<dbReference type="EMBL" id="CP000826">
    <property type="protein sequence ID" value="ABV39901.1"/>
    <property type="molecule type" value="Genomic_DNA"/>
</dbReference>
<dbReference type="SMR" id="A8G9W1"/>
<dbReference type="STRING" id="399741.Spro_0795"/>
<dbReference type="KEGG" id="spe:Spro_0795"/>
<dbReference type="eggNOG" id="COG0148">
    <property type="taxonomic scope" value="Bacteria"/>
</dbReference>
<dbReference type="HOGENOM" id="CLU_031223_2_1_6"/>
<dbReference type="OrthoDB" id="9804716at2"/>
<dbReference type="UniPathway" id="UPA00109">
    <property type="reaction ID" value="UER00187"/>
</dbReference>
<dbReference type="GO" id="GO:0009986">
    <property type="term" value="C:cell surface"/>
    <property type="evidence" value="ECO:0007669"/>
    <property type="project" value="UniProtKB-SubCell"/>
</dbReference>
<dbReference type="GO" id="GO:0005576">
    <property type="term" value="C:extracellular region"/>
    <property type="evidence" value="ECO:0007669"/>
    <property type="project" value="UniProtKB-SubCell"/>
</dbReference>
<dbReference type="GO" id="GO:0000015">
    <property type="term" value="C:phosphopyruvate hydratase complex"/>
    <property type="evidence" value="ECO:0007669"/>
    <property type="project" value="InterPro"/>
</dbReference>
<dbReference type="GO" id="GO:0000287">
    <property type="term" value="F:magnesium ion binding"/>
    <property type="evidence" value="ECO:0007669"/>
    <property type="project" value="UniProtKB-UniRule"/>
</dbReference>
<dbReference type="GO" id="GO:0004634">
    <property type="term" value="F:phosphopyruvate hydratase activity"/>
    <property type="evidence" value="ECO:0007669"/>
    <property type="project" value="UniProtKB-UniRule"/>
</dbReference>
<dbReference type="GO" id="GO:0006096">
    <property type="term" value="P:glycolytic process"/>
    <property type="evidence" value="ECO:0007669"/>
    <property type="project" value="UniProtKB-UniRule"/>
</dbReference>
<dbReference type="CDD" id="cd03313">
    <property type="entry name" value="enolase"/>
    <property type="match status" value="1"/>
</dbReference>
<dbReference type="FunFam" id="3.20.20.120:FF:000001">
    <property type="entry name" value="Enolase"/>
    <property type="match status" value="1"/>
</dbReference>
<dbReference type="FunFam" id="3.30.390.10:FF:000001">
    <property type="entry name" value="Enolase"/>
    <property type="match status" value="1"/>
</dbReference>
<dbReference type="Gene3D" id="3.20.20.120">
    <property type="entry name" value="Enolase-like C-terminal domain"/>
    <property type="match status" value="1"/>
</dbReference>
<dbReference type="Gene3D" id="3.30.390.10">
    <property type="entry name" value="Enolase-like, N-terminal domain"/>
    <property type="match status" value="1"/>
</dbReference>
<dbReference type="HAMAP" id="MF_00318">
    <property type="entry name" value="Enolase"/>
    <property type="match status" value="1"/>
</dbReference>
<dbReference type="InterPro" id="IPR000941">
    <property type="entry name" value="Enolase"/>
</dbReference>
<dbReference type="InterPro" id="IPR036849">
    <property type="entry name" value="Enolase-like_C_sf"/>
</dbReference>
<dbReference type="InterPro" id="IPR029017">
    <property type="entry name" value="Enolase-like_N"/>
</dbReference>
<dbReference type="InterPro" id="IPR020810">
    <property type="entry name" value="Enolase_C"/>
</dbReference>
<dbReference type="InterPro" id="IPR020809">
    <property type="entry name" value="Enolase_CS"/>
</dbReference>
<dbReference type="InterPro" id="IPR020811">
    <property type="entry name" value="Enolase_N"/>
</dbReference>
<dbReference type="NCBIfam" id="TIGR01060">
    <property type="entry name" value="eno"/>
    <property type="match status" value="1"/>
</dbReference>
<dbReference type="PANTHER" id="PTHR11902">
    <property type="entry name" value="ENOLASE"/>
    <property type="match status" value="1"/>
</dbReference>
<dbReference type="PANTHER" id="PTHR11902:SF1">
    <property type="entry name" value="ENOLASE"/>
    <property type="match status" value="1"/>
</dbReference>
<dbReference type="Pfam" id="PF00113">
    <property type="entry name" value="Enolase_C"/>
    <property type="match status" value="1"/>
</dbReference>
<dbReference type="Pfam" id="PF03952">
    <property type="entry name" value="Enolase_N"/>
    <property type="match status" value="1"/>
</dbReference>
<dbReference type="PIRSF" id="PIRSF001400">
    <property type="entry name" value="Enolase"/>
    <property type="match status" value="1"/>
</dbReference>
<dbReference type="PRINTS" id="PR00148">
    <property type="entry name" value="ENOLASE"/>
</dbReference>
<dbReference type="SFLD" id="SFLDS00001">
    <property type="entry name" value="Enolase"/>
    <property type="match status" value="1"/>
</dbReference>
<dbReference type="SFLD" id="SFLDF00002">
    <property type="entry name" value="enolase"/>
    <property type="match status" value="1"/>
</dbReference>
<dbReference type="SMART" id="SM01192">
    <property type="entry name" value="Enolase_C"/>
    <property type="match status" value="1"/>
</dbReference>
<dbReference type="SMART" id="SM01193">
    <property type="entry name" value="Enolase_N"/>
    <property type="match status" value="1"/>
</dbReference>
<dbReference type="SUPFAM" id="SSF51604">
    <property type="entry name" value="Enolase C-terminal domain-like"/>
    <property type="match status" value="1"/>
</dbReference>
<dbReference type="SUPFAM" id="SSF54826">
    <property type="entry name" value="Enolase N-terminal domain-like"/>
    <property type="match status" value="1"/>
</dbReference>
<dbReference type="PROSITE" id="PS00164">
    <property type="entry name" value="ENOLASE"/>
    <property type="match status" value="1"/>
</dbReference>